<dbReference type="EC" id="2.4.2.10" evidence="1"/>
<dbReference type="EMBL" id="AM260525">
    <property type="protein sequence ID" value="CAK01197.1"/>
    <property type="molecule type" value="Genomic_DNA"/>
</dbReference>
<dbReference type="RefSeq" id="WP_012231310.1">
    <property type="nucleotide sequence ID" value="NC_010161.1"/>
</dbReference>
<dbReference type="SMR" id="A9IRL8"/>
<dbReference type="KEGG" id="btr:BT_0782"/>
<dbReference type="eggNOG" id="COG0461">
    <property type="taxonomic scope" value="Bacteria"/>
</dbReference>
<dbReference type="HOGENOM" id="CLU_074878_3_0_5"/>
<dbReference type="UniPathway" id="UPA00070">
    <property type="reaction ID" value="UER00119"/>
</dbReference>
<dbReference type="Proteomes" id="UP000001592">
    <property type="component" value="Chromosome"/>
</dbReference>
<dbReference type="GO" id="GO:0000287">
    <property type="term" value="F:magnesium ion binding"/>
    <property type="evidence" value="ECO:0007669"/>
    <property type="project" value="UniProtKB-UniRule"/>
</dbReference>
<dbReference type="GO" id="GO:0004588">
    <property type="term" value="F:orotate phosphoribosyltransferase activity"/>
    <property type="evidence" value="ECO:0007669"/>
    <property type="project" value="UniProtKB-UniRule"/>
</dbReference>
<dbReference type="GO" id="GO:0044205">
    <property type="term" value="P:'de novo' UMP biosynthetic process"/>
    <property type="evidence" value="ECO:0007669"/>
    <property type="project" value="UniProtKB-UniRule"/>
</dbReference>
<dbReference type="GO" id="GO:0019856">
    <property type="term" value="P:pyrimidine nucleobase biosynthetic process"/>
    <property type="evidence" value="ECO:0007669"/>
    <property type="project" value="InterPro"/>
</dbReference>
<dbReference type="CDD" id="cd06223">
    <property type="entry name" value="PRTases_typeI"/>
    <property type="match status" value="1"/>
</dbReference>
<dbReference type="Gene3D" id="3.40.50.2020">
    <property type="match status" value="1"/>
</dbReference>
<dbReference type="HAMAP" id="MF_01208">
    <property type="entry name" value="PyrE"/>
    <property type="match status" value="1"/>
</dbReference>
<dbReference type="InterPro" id="IPR023031">
    <property type="entry name" value="OPRT"/>
</dbReference>
<dbReference type="InterPro" id="IPR006273">
    <property type="entry name" value="Orotate_PRibTrfase_bac"/>
</dbReference>
<dbReference type="InterPro" id="IPR000836">
    <property type="entry name" value="PRibTrfase_dom"/>
</dbReference>
<dbReference type="InterPro" id="IPR029057">
    <property type="entry name" value="PRTase-like"/>
</dbReference>
<dbReference type="NCBIfam" id="TIGR01367">
    <property type="entry name" value="pyrE_Therm"/>
    <property type="match status" value="1"/>
</dbReference>
<dbReference type="PANTHER" id="PTHR19278">
    <property type="entry name" value="OROTATE PHOSPHORIBOSYLTRANSFERASE"/>
    <property type="match status" value="1"/>
</dbReference>
<dbReference type="PANTHER" id="PTHR19278:SF9">
    <property type="entry name" value="URIDINE 5'-MONOPHOSPHATE SYNTHASE"/>
    <property type="match status" value="1"/>
</dbReference>
<dbReference type="Pfam" id="PF00156">
    <property type="entry name" value="Pribosyltran"/>
    <property type="match status" value="1"/>
</dbReference>
<dbReference type="SUPFAM" id="SSF53271">
    <property type="entry name" value="PRTase-like"/>
    <property type="match status" value="1"/>
</dbReference>
<dbReference type="PROSITE" id="PS00103">
    <property type="entry name" value="PUR_PYR_PR_TRANSFER"/>
    <property type="match status" value="1"/>
</dbReference>
<name>PYRE_BART1</name>
<feature type="chain" id="PRO_1000085538" description="Orotate phosphoribosyltransferase">
    <location>
        <begin position="1"/>
        <end position="192"/>
    </location>
</feature>
<feature type="binding site" evidence="1">
    <location>
        <begin position="116"/>
        <end position="124"/>
    </location>
    <ligand>
        <name>5-phospho-alpha-D-ribose 1-diphosphate</name>
        <dbReference type="ChEBI" id="CHEBI:58017"/>
    </ligand>
</feature>
<feature type="binding site" evidence="1">
    <location>
        <position position="120"/>
    </location>
    <ligand>
        <name>orotate</name>
        <dbReference type="ChEBI" id="CHEBI:30839"/>
    </ligand>
</feature>
<feature type="binding site" evidence="1">
    <location>
        <position position="148"/>
    </location>
    <ligand>
        <name>orotate</name>
        <dbReference type="ChEBI" id="CHEBI:30839"/>
    </ligand>
</feature>
<comment type="function">
    <text evidence="1">Catalyzes the transfer of a ribosyl phosphate group from 5-phosphoribose 1-diphosphate to orotate, leading to the formation of orotidine monophosphate (OMP).</text>
</comment>
<comment type="catalytic activity">
    <reaction evidence="1">
        <text>orotidine 5'-phosphate + diphosphate = orotate + 5-phospho-alpha-D-ribose 1-diphosphate</text>
        <dbReference type="Rhea" id="RHEA:10380"/>
        <dbReference type="ChEBI" id="CHEBI:30839"/>
        <dbReference type="ChEBI" id="CHEBI:33019"/>
        <dbReference type="ChEBI" id="CHEBI:57538"/>
        <dbReference type="ChEBI" id="CHEBI:58017"/>
        <dbReference type="EC" id="2.4.2.10"/>
    </reaction>
</comment>
<comment type="cofactor">
    <cofactor evidence="1">
        <name>Mg(2+)</name>
        <dbReference type="ChEBI" id="CHEBI:18420"/>
    </cofactor>
</comment>
<comment type="pathway">
    <text evidence="1">Pyrimidine metabolism; UMP biosynthesis via de novo pathway; UMP from orotate: step 1/2.</text>
</comment>
<comment type="subunit">
    <text evidence="1">Homodimer.</text>
</comment>
<comment type="similarity">
    <text evidence="1">Belongs to the purine/pyrimidine phosphoribosyltransferase family. PyrE subfamily.</text>
</comment>
<protein>
    <recommendedName>
        <fullName evidence="1">Orotate phosphoribosyltransferase</fullName>
        <shortName evidence="1">OPRT</shortName>
        <shortName evidence="1">OPRTase</shortName>
        <ecNumber evidence="1">2.4.2.10</ecNumber>
    </recommendedName>
</protein>
<keyword id="KW-0328">Glycosyltransferase</keyword>
<keyword id="KW-0460">Magnesium</keyword>
<keyword id="KW-0665">Pyrimidine biosynthesis</keyword>
<keyword id="KW-0808">Transferase</keyword>
<sequence>MNTQDVIDIFKQADAILEGHFILTSGRHSATYMQKAKVFMHADLTEKLCRGLAEKIKESIAEPIDYVVGPAIGGLIPSYETSRHLGVPSLWVERVNGVFELRRFEIKKGARVVIVEDIVTTGLSIRETVEALAAAGAEVLASACILDRSGGKVDVGVPLIALAEYEIASYASDALPADLSVLPAIKPGSRNI</sequence>
<proteinExistence type="inferred from homology"/>
<evidence type="ECO:0000255" key="1">
    <source>
        <dbReference type="HAMAP-Rule" id="MF_01208"/>
    </source>
</evidence>
<organism>
    <name type="scientific">Bartonella tribocorum (strain CIP 105476 / IBS 506)</name>
    <dbReference type="NCBI Taxonomy" id="382640"/>
    <lineage>
        <taxon>Bacteria</taxon>
        <taxon>Pseudomonadati</taxon>
        <taxon>Pseudomonadota</taxon>
        <taxon>Alphaproteobacteria</taxon>
        <taxon>Hyphomicrobiales</taxon>
        <taxon>Bartonellaceae</taxon>
        <taxon>Bartonella</taxon>
    </lineage>
</organism>
<accession>A9IRL8</accession>
<reference key="1">
    <citation type="journal article" date="2007" name="Nat. Genet.">
        <title>Genomic analysis of Bartonella identifies type IV secretion systems as host adaptability factors.</title>
        <authorList>
            <person name="Saenz H.L."/>
            <person name="Engel P."/>
            <person name="Stoeckli M.C."/>
            <person name="Lanz C."/>
            <person name="Raddatz G."/>
            <person name="Vayssier-Taussat M."/>
            <person name="Birtles R."/>
            <person name="Schuster S.C."/>
            <person name="Dehio C."/>
        </authorList>
    </citation>
    <scope>NUCLEOTIDE SEQUENCE [LARGE SCALE GENOMIC DNA]</scope>
    <source>
        <strain>CIP 105476 / IBS 506</strain>
    </source>
</reference>
<gene>
    <name evidence="1" type="primary">pyrE</name>
    <name type="ordered locus">BT_0782</name>
</gene>